<reference key="1">
    <citation type="submission" date="2007-12" db="EMBL/GenBank/DDBJ databases">
        <title>Brucella suis ATCC 23445 whole genome shotgun sequencing project.</title>
        <authorList>
            <person name="Setubal J.C."/>
            <person name="Bowns C."/>
            <person name="Boyle S."/>
            <person name="Crasta O.R."/>
            <person name="Czar M.J."/>
            <person name="Dharmanolla C."/>
            <person name="Gillespie J.J."/>
            <person name="Kenyon R.W."/>
            <person name="Lu J."/>
            <person name="Mane S."/>
            <person name="Mohapatra S."/>
            <person name="Nagrani S."/>
            <person name="Purkayastha A."/>
            <person name="Rajasimha H.K."/>
            <person name="Shallom J.M."/>
            <person name="Shallom S."/>
            <person name="Shukla M."/>
            <person name="Snyder E.E."/>
            <person name="Sobral B.W."/>
            <person name="Wattam A.R."/>
            <person name="Will R."/>
            <person name="Williams K."/>
            <person name="Yoo H."/>
            <person name="Bruce D."/>
            <person name="Detter C."/>
            <person name="Munk C."/>
            <person name="Brettin T.S."/>
        </authorList>
    </citation>
    <scope>NUCLEOTIDE SEQUENCE [LARGE SCALE GENOMIC DNA]</scope>
    <source>
        <strain>ATCC 23445 / NCTC 10510</strain>
    </source>
</reference>
<protein>
    <recommendedName>
        <fullName evidence="1">Fructose-1,6-bisphosphatase class 1</fullName>
        <shortName evidence="1">FBPase class 1</shortName>
        <ecNumber evidence="1">3.1.3.11</ecNumber>
    </recommendedName>
    <alternativeName>
        <fullName evidence="1">D-fructose-1,6-bisphosphate 1-phosphohydrolase class 1</fullName>
    </alternativeName>
</protein>
<sequence length="340" mass="36156">MTLVGNFSPLVLVGDSDRVEAETVGAYLDGWAGHDKVRLATANAIKAILSGAGRLVGRIARGYLPGDPGKLVGVNSDQDQQKSIDVGSHNLFVELLIAAGVASILSEEADLPVAGKADGLVAVAIDPLDGSGNVGLGAPLGTIFSIFPADVEEPFLQPGNRQIAAGYVSYGNSVDLGFSVGEGVIFATLDPVSGQFHITRRNVKLPERTSDLAFNASVQRHLSAGMQAYVNDAFLGKDGPRGRNFNMRWLGAAVGDMHRIMQRGGLFFYVNDSRPGYEKGRLRLVYEANPIAFLAREAGGKATDGSRPILDIVPQTYHERSALVFGVAEEVDILGEYFVK</sequence>
<accession>A9WZF8</accession>
<organism>
    <name type="scientific">Brucella suis (strain ATCC 23445 / NCTC 10510)</name>
    <dbReference type="NCBI Taxonomy" id="470137"/>
    <lineage>
        <taxon>Bacteria</taxon>
        <taxon>Pseudomonadati</taxon>
        <taxon>Pseudomonadota</taxon>
        <taxon>Alphaproteobacteria</taxon>
        <taxon>Hyphomicrobiales</taxon>
        <taxon>Brucellaceae</taxon>
        <taxon>Brucella/Ochrobactrum group</taxon>
        <taxon>Brucella</taxon>
    </lineage>
</organism>
<evidence type="ECO:0000255" key="1">
    <source>
        <dbReference type="HAMAP-Rule" id="MF_01855"/>
    </source>
</evidence>
<gene>
    <name evidence="1" type="primary">fbp</name>
    <name type="ordered locus">BSUIS_B0865</name>
</gene>
<comment type="catalytic activity">
    <reaction evidence="1">
        <text>beta-D-fructose 1,6-bisphosphate + H2O = beta-D-fructose 6-phosphate + phosphate</text>
        <dbReference type="Rhea" id="RHEA:11064"/>
        <dbReference type="ChEBI" id="CHEBI:15377"/>
        <dbReference type="ChEBI" id="CHEBI:32966"/>
        <dbReference type="ChEBI" id="CHEBI:43474"/>
        <dbReference type="ChEBI" id="CHEBI:57634"/>
        <dbReference type="EC" id="3.1.3.11"/>
    </reaction>
</comment>
<comment type="cofactor">
    <cofactor evidence="1">
        <name>Mg(2+)</name>
        <dbReference type="ChEBI" id="CHEBI:18420"/>
    </cofactor>
    <text evidence="1">Binds 2 magnesium ions per subunit.</text>
</comment>
<comment type="pathway">
    <text evidence="1">Carbohydrate biosynthesis; gluconeogenesis.</text>
</comment>
<comment type="subunit">
    <text evidence="1">Homotetramer.</text>
</comment>
<comment type="subcellular location">
    <subcellularLocation>
        <location evidence="1">Cytoplasm</location>
    </subcellularLocation>
</comment>
<comment type="similarity">
    <text evidence="1">Belongs to the FBPase class 1 family.</text>
</comment>
<feature type="chain" id="PRO_0000364483" description="Fructose-1,6-bisphosphatase class 1">
    <location>
        <begin position="1"/>
        <end position="340"/>
    </location>
</feature>
<feature type="binding site" evidence="1">
    <location>
        <position position="107"/>
    </location>
    <ligand>
        <name>Mg(2+)</name>
        <dbReference type="ChEBI" id="CHEBI:18420"/>
        <label>1</label>
    </ligand>
</feature>
<feature type="binding site" evidence="1">
    <location>
        <position position="126"/>
    </location>
    <ligand>
        <name>Mg(2+)</name>
        <dbReference type="ChEBI" id="CHEBI:18420"/>
        <label>1</label>
    </ligand>
</feature>
<feature type="binding site" evidence="1">
    <location>
        <position position="126"/>
    </location>
    <ligand>
        <name>Mg(2+)</name>
        <dbReference type="ChEBI" id="CHEBI:18420"/>
        <label>2</label>
    </ligand>
</feature>
<feature type="binding site" evidence="1">
    <location>
        <position position="128"/>
    </location>
    <ligand>
        <name>Mg(2+)</name>
        <dbReference type="ChEBI" id="CHEBI:18420"/>
        <label>1</label>
    </ligand>
</feature>
<feature type="binding site" evidence="1">
    <location>
        <position position="129"/>
    </location>
    <ligand>
        <name>Mg(2+)</name>
        <dbReference type="ChEBI" id="CHEBI:18420"/>
        <label>2</label>
    </ligand>
</feature>
<feature type="binding site" evidence="1">
    <location>
        <position position="215"/>
    </location>
    <ligand>
        <name>substrate</name>
    </ligand>
</feature>
<feature type="binding site" evidence="1">
    <location>
        <position position="287"/>
    </location>
    <ligand>
        <name>Mg(2+)</name>
        <dbReference type="ChEBI" id="CHEBI:18420"/>
        <label>2</label>
    </ligand>
</feature>
<proteinExistence type="inferred from homology"/>
<keyword id="KW-0119">Carbohydrate metabolism</keyword>
<keyword id="KW-0963">Cytoplasm</keyword>
<keyword id="KW-0378">Hydrolase</keyword>
<keyword id="KW-0460">Magnesium</keyword>
<keyword id="KW-0479">Metal-binding</keyword>
<name>F16PA_BRUSI</name>
<dbReference type="EC" id="3.1.3.11" evidence="1"/>
<dbReference type="EMBL" id="CP000912">
    <property type="protein sequence ID" value="ABY39824.1"/>
    <property type="molecule type" value="Genomic_DNA"/>
</dbReference>
<dbReference type="RefSeq" id="WP_002965774.1">
    <property type="nucleotide sequence ID" value="NC_010167.1"/>
</dbReference>
<dbReference type="SMR" id="A9WZF8"/>
<dbReference type="KEGG" id="bmt:BSUIS_B0865"/>
<dbReference type="HOGENOM" id="CLU_039977_0_0_5"/>
<dbReference type="UniPathway" id="UPA00138"/>
<dbReference type="Proteomes" id="UP000008545">
    <property type="component" value="Chromosome II"/>
</dbReference>
<dbReference type="GO" id="GO:0005829">
    <property type="term" value="C:cytosol"/>
    <property type="evidence" value="ECO:0007669"/>
    <property type="project" value="TreeGrafter"/>
</dbReference>
<dbReference type="GO" id="GO:0042132">
    <property type="term" value="F:fructose 1,6-bisphosphate 1-phosphatase activity"/>
    <property type="evidence" value="ECO:0007669"/>
    <property type="project" value="UniProtKB-UniRule"/>
</dbReference>
<dbReference type="GO" id="GO:0000287">
    <property type="term" value="F:magnesium ion binding"/>
    <property type="evidence" value="ECO:0007669"/>
    <property type="project" value="UniProtKB-UniRule"/>
</dbReference>
<dbReference type="GO" id="GO:0030388">
    <property type="term" value="P:fructose 1,6-bisphosphate metabolic process"/>
    <property type="evidence" value="ECO:0007669"/>
    <property type="project" value="TreeGrafter"/>
</dbReference>
<dbReference type="GO" id="GO:0006002">
    <property type="term" value="P:fructose 6-phosphate metabolic process"/>
    <property type="evidence" value="ECO:0007669"/>
    <property type="project" value="TreeGrafter"/>
</dbReference>
<dbReference type="GO" id="GO:0006000">
    <property type="term" value="P:fructose metabolic process"/>
    <property type="evidence" value="ECO:0007669"/>
    <property type="project" value="TreeGrafter"/>
</dbReference>
<dbReference type="GO" id="GO:0006094">
    <property type="term" value="P:gluconeogenesis"/>
    <property type="evidence" value="ECO:0007669"/>
    <property type="project" value="UniProtKB-UniRule"/>
</dbReference>
<dbReference type="GO" id="GO:0005986">
    <property type="term" value="P:sucrose biosynthetic process"/>
    <property type="evidence" value="ECO:0007669"/>
    <property type="project" value="TreeGrafter"/>
</dbReference>
<dbReference type="CDD" id="cd00354">
    <property type="entry name" value="FBPase"/>
    <property type="match status" value="1"/>
</dbReference>
<dbReference type="Gene3D" id="3.40.190.80">
    <property type="match status" value="1"/>
</dbReference>
<dbReference type="Gene3D" id="3.30.540.10">
    <property type="entry name" value="Fructose-1,6-Bisphosphatase, subunit A, domain 1"/>
    <property type="match status" value="1"/>
</dbReference>
<dbReference type="HAMAP" id="MF_01855">
    <property type="entry name" value="FBPase_class1"/>
    <property type="match status" value="1"/>
</dbReference>
<dbReference type="InterPro" id="IPR044015">
    <property type="entry name" value="FBPase_C_dom"/>
</dbReference>
<dbReference type="InterPro" id="IPR000146">
    <property type="entry name" value="FBPase_class-1"/>
</dbReference>
<dbReference type="InterPro" id="IPR033391">
    <property type="entry name" value="FBPase_N"/>
</dbReference>
<dbReference type="InterPro" id="IPR028343">
    <property type="entry name" value="FBPtase"/>
</dbReference>
<dbReference type="InterPro" id="IPR020548">
    <property type="entry name" value="Fructose_bisphosphatase_AS"/>
</dbReference>
<dbReference type="NCBIfam" id="NF006780">
    <property type="entry name" value="PRK09293.1-4"/>
    <property type="match status" value="1"/>
</dbReference>
<dbReference type="PANTHER" id="PTHR11556">
    <property type="entry name" value="FRUCTOSE-1,6-BISPHOSPHATASE-RELATED"/>
    <property type="match status" value="1"/>
</dbReference>
<dbReference type="PANTHER" id="PTHR11556:SF35">
    <property type="entry name" value="SEDOHEPTULOSE-1,7-BISPHOSPHATASE, CHLOROPLASTIC"/>
    <property type="match status" value="1"/>
</dbReference>
<dbReference type="Pfam" id="PF00316">
    <property type="entry name" value="FBPase"/>
    <property type="match status" value="1"/>
</dbReference>
<dbReference type="Pfam" id="PF18913">
    <property type="entry name" value="FBPase_C"/>
    <property type="match status" value="1"/>
</dbReference>
<dbReference type="PIRSF" id="PIRSF500210">
    <property type="entry name" value="FBPtase"/>
    <property type="match status" value="1"/>
</dbReference>
<dbReference type="PIRSF" id="PIRSF000904">
    <property type="entry name" value="FBPtase_SBPase"/>
    <property type="match status" value="1"/>
</dbReference>
<dbReference type="PRINTS" id="PR00115">
    <property type="entry name" value="F16BPHPHTASE"/>
</dbReference>
<dbReference type="SUPFAM" id="SSF56655">
    <property type="entry name" value="Carbohydrate phosphatase"/>
    <property type="match status" value="1"/>
</dbReference>
<dbReference type="PROSITE" id="PS00124">
    <property type="entry name" value="FBPASE"/>
    <property type="match status" value="1"/>
</dbReference>